<evidence type="ECO:0000255" key="1"/>
<evidence type="ECO:0000269" key="2">
    <source>
    </source>
</evidence>
<evidence type="ECO:0000269" key="3">
    <source>
    </source>
</evidence>
<evidence type="ECO:0000269" key="4">
    <source>
    </source>
</evidence>
<evidence type="ECO:0000269" key="5">
    <source>
    </source>
</evidence>
<evidence type="ECO:0000269" key="6">
    <source>
    </source>
</evidence>
<evidence type="ECO:0000269" key="7">
    <source>
    </source>
</evidence>
<evidence type="ECO:0000305" key="8"/>
<evidence type="ECO:0000305" key="9">
    <source>
    </source>
</evidence>
<evidence type="ECO:0000312" key="10">
    <source>
        <dbReference type="EMBL" id="BAB21059.1"/>
    </source>
</evidence>
<evidence type="ECO:0000312" key="11">
    <source>
        <dbReference type="PDB" id="1J0N"/>
    </source>
</evidence>
<evidence type="ECO:0000312" key="12">
    <source>
        <dbReference type="PDB" id="2E22"/>
    </source>
</evidence>
<evidence type="ECO:0007744" key="13">
    <source>
        <dbReference type="PDB" id="1X1H"/>
    </source>
</evidence>
<evidence type="ECO:0007744" key="14">
    <source>
        <dbReference type="PDB" id="1X1I"/>
    </source>
</evidence>
<evidence type="ECO:0007744" key="15">
    <source>
        <dbReference type="PDB" id="1X1J"/>
    </source>
</evidence>
<evidence type="ECO:0007829" key="16">
    <source>
        <dbReference type="PDB" id="1J0M"/>
    </source>
</evidence>
<evidence type="ECO:0007829" key="17">
    <source>
        <dbReference type="PDB" id="1X1I"/>
    </source>
</evidence>
<evidence type="ECO:0007829" key="18">
    <source>
        <dbReference type="PDB" id="1X1J"/>
    </source>
</evidence>
<evidence type="ECO:0007829" key="19">
    <source>
        <dbReference type="PDB" id="2E24"/>
    </source>
</evidence>
<accession>Q9AQS0</accession>
<sequence length="930" mass="99313">MLSGILIAALLMTLWGGWQPDIAHASDEFDALRIKWATLLTGGPALDPADSDIAARTDKLAQDANDYWEDMDLSSSRTYIWYALRGNGTSDNVNAVYERLRTMALAATTVGSSLYGNADLKEDILDALDWLYVNSYNSTRSRSAYNWWHWQLGIPMSLNDIAVLLYDDISAARMATYMDTIDYFTPSIGLTGANRAWQAIVVGVRAVIVKDAVKLAAARNGLSGTGIFPYATGGDGFYADGSFVQHTTFAYTGGYGSSVLETTANLMYLLSGSTWSVSDPNQSNVWQWIYEAYRPLLYKGAMMDMVRGREISRSYAQDHAVGHGIVASIVRLAQFAPAPHAAAFKQIAKRVIQEDTFSSFYGDVSTDTIRLAKAIVDDPSIAPAAAPNLYKQYAAMDRAVLQRPGFALGLALYSTRISSYESINSENGRGWYTGAGATYLYNQDLAQYSEDYWPTVDAYRIPGTTVASGTPIASGTGTSSWTGGVSLAGQYGASGMDLSYGAYNLSARKSWFMFDDEIVALGSGISSTAGIPIETVVDNRKLNGAGDNAWTANGAALSTGLGVAQTLTGVNWVHLAGNTADGSDIGYYFPGGATLQTKREARTGTWKQINNRPATPSTAVTRNYETMWIDHGTNPSGASYGYVLLPNKTSAQVGAYAADPAIEIVVNTSGVQSVKEKTLGLVGANFWTDTTQTADLITSNKKASVMTREIADERLEASVSDPTQANNGTIAIELARSAEGYSADPGITVTQLAPTIKFTVNVNGAKGKSFHASFQLGEDTSGPVDPGEPELPSVIVDNADSAGVTRTGTWKTASTQTDRYGANYLHDDNAGKGTKSVTFTPNLPIAGSYEVYLMWPAHFNREDAVQVDVGHASGTTRTAVDQRSGGGVWHSIGTYEFLAGSGGSVTIRNDALGSPDGYVVADAVKFVAVG</sequence>
<proteinExistence type="evidence at protein level"/>
<organism>
    <name type="scientific">Bacillus sp. (strain GL1)</name>
    <dbReference type="NCBI Taxonomy" id="84635"/>
    <lineage>
        <taxon>Bacteria</taxon>
        <taxon>Bacillati</taxon>
        <taxon>Bacillota</taxon>
        <taxon>Bacilli</taxon>
        <taxon>Bacillales</taxon>
        <taxon>Bacillaceae</taxon>
        <taxon>Bacillus</taxon>
    </lineage>
</organism>
<keyword id="KW-0002">3D-structure</keyword>
<keyword id="KW-0106">Calcium</keyword>
<keyword id="KW-0903">Direct protein sequencing</keyword>
<keyword id="KW-0456">Lyase</keyword>
<keyword id="KW-0479">Metal-binding</keyword>
<keyword id="KW-0964">Secreted</keyword>
<keyword id="KW-0732">Signal</keyword>
<protein>
    <recommendedName>
        <fullName evidence="10">Xanthan lyase</fullName>
        <ecNumber evidence="7">4.2.2.12</ecNumber>
    </recommendedName>
</protein>
<reference evidence="8 10" key="1">
    <citation type="journal article" date="2001" name="Appl. Environ. Microbiol.">
        <title>Polysaccharide lyase: molecular cloning, sequencing, and overexpression of the xanthan lyase gene of Bacillus sp. strain GL1.</title>
        <authorList>
            <person name="Hashimoto W."/>
            <person name="Miki H."/>
            <person name="Tsuchiya N."/>
            <person name="Nankai H."/>
            <person name="Murata K."/>
        </authorList>
    </citation>
    <scope>NUCLEOTIDE SEQUENCE [GENOMIC DNA]</scope>
    <scope>PROTEIN SEQUENCE OF 26-35; 315-323; 332-341 AND 374-383</scope>
    <scope>FUNCTION</scope>
    <scope>CATALYTIC ACTIVITY</scope>
    <scope>ACTIVITY REGULATION</scope>
    <scope>SUBUNIT</scope>
</reference>
<reference evidence="8" key="2">
    <citation type="journal article" date="1998" name="Appl. Environ. Microbiol.">
        <title>Xanthan lyase of Bacillus sp. strain GL1 liberates pyruvylated mannose from xanthan side chains.</title>
        <authorList>
            <person name="Hashimoto W."/>
            <person name="Miki H."/>
            <person name="Tsuchiya N."/>
            <person name="Nankai H."/>
            <person name="Murata K."/>
        </authorList>
    </citation>
    <scope>FUNCTION</scope>
    <scope>CATALYTIC ACTIVITY</scope>
    <scope>ACTIVITY REGULATION</scope>
    <scope>BIOPHYSICOCHEMICAL PROPERTIES</scope>
    <scope>SUBUNIT</scope>
    <scope>SUBCELLULAR LOCATION</scope>
</reference>
<reference evidence="8" key="3">
    <citation type="journal article" date="1999" name="Appl. Environ. Microbiol.">
        <title>Microbial system for polysaccharide depolymerization: enzymatic route for xanthan depolymerization by Bacillus sp. strain GL1.</title>
        <authorList>
            <person name="Nankai H."/>
            <person name="Hashimoto W."/>
            <person name="Miki H."/>
            <person name="Kawai S."/>
            <person name="Murata K."/>
        </authorList>
    </citation>
    <scope>FUNCTION</scope>
    <scope>CATALYTIC ACTIVITY</scope>
</reference>
<reference evidence="8 11" key="4">
    <citation type="journal article" date="2003" name="J. Biol. Chem.">
        <title>Crystal structure of Bacillus sp. GL1 xanthan lyase, which acts on the side chains of xanthan.</title>
        <authorList>
            <person name="Hashimoto W."/>
            <person name="Nankai H."/>
            <person name="Mikami B."/>
            <person name="Murata K."/>
        </authorList>
    </citation>
    <scope>X-RAY CRYSTALLOGRAPHY (2.30 ANGSTROMS) OF 26-777 IN COMPLEX WITH PYRUVYLATED MANNOSE AND CALCIUM</scope>
</reference>
<reference evidence="13 14 15" key="5">
    <citation type="journal article" date="2005" name="J. Mol. Biol.">
        <title>Crystal structure of Bacillus sp. GL1 xanthan lyase complexed with a substrate: insights into the enzyme reaction mechanism.</title>
        <authorList>
            <person name="Maruyama Y."/>
            <person name="Hashimoto W."/>
            <person name="Mikami B."/>
            <person name="Murata K."/>
        </authorList>
    </citation>
    <scope>X-RAY CRYSTALLOGRAPHY (1.80 ANGSTROMS) OF MUTANT ALA-194 IN COMPLEXES WITH PYRUVYLATED MANNOSE; PENTASACCHARIDE AND CALCIUM</scope>
    <scope>MUTAGENESIS OF ASN-194; HIS-246 AND TYR-255</scope>
    <scope>FUNCTION</scope>
    <scope>CATALYTIC ACTIVITY</scope>
    <scope>BIOPHYSICOCHEMICAL PROPERTIES</scope>
    <scope>ACTIVE SITE</scope>
    <scope>REACTION MECHANISM</scope>
</reference>
<reference evidence="8 12" key="6">
    <citation type="journal article" date="2007" name="Biochemistry">
        <title>A structural factor responsible for substrate recognition by Bacillus sp. GL1 xanthan lyase that acts specifically on pyruvated side chains of xanthan.</title>
        <authorList>
            <person name="Maruyama Y."/>
            <person name="Mikami B."/>
            <person name="Hashimoto W."/>
            <person name="Murata K."/>
        </authorList>
    </citation>
    <scope>X-RAY CRYSTALLOGRAPHY (2.15 ANGSTROMS) OF 26-777 IN COMPLEX WITH MANNOSE AND MUTANT ARG-612</scope>
    <scope>MUTAGENESIS OF ARG-313; TYR-315 AND ARG-612</scope>
    <scope>ACTIVITY REGULATION</scope>
</reference>
<dbReference type="EC" id="4.2.2.12" evidence="7"/>
<dbReference type="EMBL" id="AB037178">
    <property type="protein sequence ID" value="BAB21059.1"/>
    <property type="molecule type" value="Genomic_DNA"/>
</dbReference>
<dbReference type="PDB" id="1J0M">
    <property type="method" value="X-ray"/>
    <property type="resolution" value="2.30 A"/>
    <property type="chains" value="A=26-777"/>
</dbReference>
<dbReference type="PDB" id="1J0N">
    <property type="method" value="X-ray"/>
    <property type="resolution" value="2.40 A"/>
    <property type="chains" value="A=26-777"/>
</dbReference>
<dbReference type="PDB" id="1X1H">
    <property type="method" value="X-ray"/>
    <property type="resolution" value="2.30 A"/>
    <property type="chains" value="A=26-777"/>
</dbReference>
<dbReference type="PDB" id="1X1I">
    <property type="method" value="X-ray"/>
    <property type="resolution" value="1.80 A"/>
    <property type="chains" value="A=26-777"/>
</dbReference>
<dbReference type="PDB" id="1X1J">
    <property type="method" value="X-ray"/>
    <property type="resolution" value="2.10 A"/>
    <property type="chains" value="A=26-777"/>
</dbReference>
<dbReference type="PDB" id="2E22">
    <property type="method" value="X-ray"/>
    <property type="resolution" value="2.40 A"/>
    <property type="chains" value="A=26-777"/>
</dbReference>
<dbReference type="PDB" id="2E24">
    <property type="method" value="X-ray"/>
    <property type="resolution" value="2.15 A"/>
    <property type="chains" value="A=26-777"/>
</dbReference>
<dbReference type="PDBsum" id="1J0M"/>
<dbReference type="PDBsum" id="1J0N"/>
<dbReference type="PDBsum" id="1X1H"/>
<dbReference type="PDBsum" id="1X1I"/>
<dbReference type="PDBsum" id="1X1J"/>
<dbReference type="PDBsum" id="2E22"/>
<dbReference type="PDBsum" id="2E24"/>
<dbReference type="SMR" id="Q9AQS0"/>
<dbReference type="DrugBank" id="DB04386">
    <property type="generic name" value="4,6-O-(1-Carboxyethylidene)-Beta-D-Glucose"/>
</dbReference>
<dbReference type="DrugBank" id="DB04597">
    <property type="generic name" value="4,6-O-(1-CARBOXYETHYLIDENE)-BETA-D-MANNOSE"/>
</dbReference>
<dbReference type="DrugBank" id="DB04596">
    <property type="generic name" value="4-O-{4,6-O-[(1S)-1-Carboxyethylidene]-Beta-D-mannopyranosyl}-D-glucopyranuronic acid"/>
</dbReference>
<dbReference type="CAZy" id="PL8">
    <property type="family name" value="Polysaccharide Lyase Family 8"/>
</dbReference>
<dbReference type="EvolutionaryTrace" id="Q9AQS0"/>
<dbReference type="GO" id="GO:0005576">
    <property type="term" value="C:extracellular region"/>
    <property type="evidence" value="ECO:0007669"/>
    <property type="project" value="UniProtKB-SubCell"/>
</dbReference>
<dbReference type="GO" id="GO:0005509">
    <property type="term" value="F:calcium ion binding"/>
    <property type="evidence" value="ECO:0000314"/>
    <property type="project" value="UniProtKB"/>
</dbReference>
<dbReference type="GO" id="GO:0005537">
    <property type="term" value="F:D-mannose binding"/>
    <property type="evidence" value="ECO:0000314"/>
    <property type="project" value="UniProtKB"/>
</dbReference>
<dbReference type="GO" id="GO:0047492">
    <property type="term" value="F:xanthan lyase activity"/>
    <property type="evidence" value="ECO:0000314"/>
    <property type="project" value="UniProtKB"/>
</dbReference>
<dbReference type="GO" id="GO:0005976">
    <property type="term" value="P:polysaccharide metabolic process"/>
    <property type="evidence" value="ECO:0000314"/>
    <property type="project" value="UniProtKB"/>
</dbReference>
<dbReference type="CDD" id="cd14488">
    <property type="entry name" value="CBM6-CBM35-CBM36_like_2"/>
    <property type="match status" value="1"/>
</dbReference>
<dbReference type="CDD" id="cd01083">
    <property type="entry name" value="GAG_Lyase"/>
    <property type="match status" value="1"/>
</dbReference>
<dbReference type="FunFam" id="1.50.10.100:FF:000006">
    <property type="entry name" value="Xanthan lyase"/>
    <property type="match status" value="1"/>
</dbReference>
<dbReference type="Gene3D" id="2.70.98.10">
    <property type="match status" value="1"/>
</dbReference>
<dbReference type="Gene3D" id="1.50.10.100">
    <property type="entry name" value="Chondroitin AC/alginate lyase"/>
    <property type="match status" value="1"/>
</dbReference>
<dbReference type="Gene3D" id="2.60.220.10">
    <property type="entry name" value="Polysaccharide lyase family 8-like, C-terminal"/>
    <property type="match status" value="1"/>
</dbReference>
<dbReference type="InterPro" id="IPR033803">
    <property type="entry name" value="CBM6/CBM35/CBM36-like_2"/>
</dbReference>
<dbReference type="InterPro" id="IPR008929">
    <property type="entry name" value="Chondroitin_lyas"/>
</dbReference>
<dbReference type="InterPro" id="IPR011013">
    <property type="entry name" value="Gal_mutarotase_sf_dom"/>
</dbReference>
<dbReference type="InterPro" id="IPR014718">
    <property type="entry name" value="GH-type_carb-bd"/>
</dbReference>
<dbReference type="InterPro" id="IPR038970">
    <property type="entry name" value="Lyase_8"/>
</dbReference>
<dbReference type="InterPro" id="IPR011071">
    <property type="entry name" value="Lyase_8-like_C"/>
</dbReference>
<dbReference type="InterPro" id="IPR012970">
    <property type="entry name" value="Lyase_8_alpha_N"/>
</dbReference>
<dbReference type="InterPro" id="IPR004103">
    <property type="entry name" value="Lyase_8_C"/>
</dbReference>
<dbReference type="InterPro" id="IPR003159">
    <property type="entry name" value="Lyase_8_central_dom"/>
</dbReference>
<dbReference type="PANTHER" id="PTHR38481">
    <property type="entry name" value="HYALURONATE LYASE"/>
    <property type="match status" value="1"/>
</dbReference>
<dbReference type="PANTHER" id="PTHR38481:SF1">
    <property type="entry name" value="HYALURONATE LYASE"/>
    <property type="match status" value="1"/>
</dbReference>
<dbReference type="Pfam" id="PF25275">
    <property type="entry name" value="Golvesin_C"/>
    <property type="match status" value="1"/>
</dbReference>
<dbReference type="Pfam" id="PF02278">
    <property type="entry name" value="Lyase_8"/>
    <property type="match status" value="1"/>
</dbReference>
<dbReference type="Pfam" id="PF02884">
    <property type="entry name" value="Lyase_8_C"/>
    <property type="match status" value="1"/>
</dbReference>
<dbReference type="Pfam" id="PF08124">
    <property type="entry name" value="Lyase_8_N"/>
    <property type="match status" value="1"/>
</dbReference>
<dbReference type="SUPFAM" id="SSF48230">
    <property type="entry name" value="Chondroitin AC/alginate lyase"/>
    <property type="match status" value="1"/>
</dbReference>
<dbReference type="SUPFAM" id="SSF74650">
    <property type="entry name" value="Galactose mutarotase-like"/>
    <property type="match status" value="1"/>
</dbReference>
<dbReference type="SUPFAM" id="SSF49863">
    <property type="entry name" value="Hyaluronate lyase-like, C-terminal domain"/>
    <property type="match status" value="1"/>
</dbReference>
<feature type="signal peptide" evidence="3">
    <location>
        <begin position="1"/>
        <end position="25"/>
    </location>
</feature>
<feature type="chain" id="PRO_0000417933" description="Xanthan lyase" evidence="1">
    <location>
        <begin position="26"/>
        <end position="930"/>
    </location>
</feature>
<feature type="active site" description="Proton donor/acceptor" evidence="9">
    <location>
        <position position="255"/>
    </location>
</feature>
<feature type="binding site" evidence="5 15">
    <location>
        <begin position="146"/>
        <end position="148"/>
    </location>
    <ligand>
        <name>xanthan</name>
        <dbReference type="ChEBI" id="CHEBI:189560"/>
    </ligand>
</feature>
<feature type="binding site" evidence="5 15">
    <location>
        <position position="246"/>
    </location>
    <ligand>
        <name>xanthan</name>
        <dbReference type="ChEBI" id="CHEBI:189560"/>
    </ligand>
</feature>
<feature type="binding site" evidence="5 15">
    <location>
        <position position="255"/>
    </location>
    <ligand>
        <name>xanthan</name>
        <dbReference type="ChEBI" id="CHEBI:189560"/>
    </ligand>
</feature>
<feature type="binding site" evidence="5 15">
    <location>
        <position position="309"/>
    </location>
    <ligand>
        <name>xanthan</name>
        <dbReference type="ChEBI" id="CHEBI:189560"/>
    </ligand>
</feature>
<feature type="binding site" evidence="5 15">
    <location>
        <begin position="313"/>
        <end position="315"/>
    </location>
    <ligand>
        <name>xanthan</name>
        <dbReference type="ChEBI" id="CHEBI:189560"/>
    </ligand>
</feature>
<feature type="binding site" evidence="5 15">
    <location>
        <position position="424"/>
    </location>
    <ligand>
        <name>xanthan</name>
        <dbReference type="ChEBI" id="CHEBI:189560"/>
    </ligand>
</feature>
<feature type="binding site" evidence="4 5">
    <location>
        <position position="515"/>
    </location>
    <ligand>
        <name>Ca(2+)</name>
        <dbReference type="ChEBI" id="CHEBI:29108"/>
    </ligand>
</feature>
<feature type="binding site" evidence="4 5">
    <location>
        <position position="516"/>
    </location>
    <ligand>
        <name>Ca(2+)</name>
        <dbReference type="ChEBI" id="CHEBI:29108"/>
    </ligand>
</feature>
<feature type="binding site" evidence="4 5">
    <location>
        <position position="517"/>
    </location>
    <ligand>
        <name>Ca(2+)</name>
        <dbReference type="ChEBI" id="CHEBI:29108"/>
    </ligand>
</feature>
<feature type="binding site" evidence="5 15">
    <location>
        <position position="612"/>
    </location>
    <ligand>
        <name>xanthan</name>
        <dbReference type="ChEBI" id="CHEBI:189560"/>
    </ligand>
</feature>
<feature type="binding site" evidence="4 5">
    <location>
        <position position="676"/>
    </location>
    <ligand>
        <name>Ca(2+)</name>
        <dbReference type="ChEBI" id="CHEBI:29108"/>
    </ligand>
</feature>
<feature type="mutagenesis site" description="Loss of activity by 60%." evidence="5">
    <original>N</original>
    <variation>A</variation>
    <location>
        <position position="194"/>
    </location>
</feature>
<feature type="mutagenesis site" description="Loss of activity by 60%." evidence="5">
    <original>H</original>
    <variation>A</variation>
    <location>
        <position position="246"/>
    </location>
</feature>
<feature type="mutagenesis site" description="Loss of activity by 50%." evidence="5">
    <original>Y</original>
    <variation>F</variation>
    <location>
        <position position="255"/>
    </location>
</feature>
<feature type="mutagenesis site" description="Reduced catalytic activity." evidence="6">
    <original>R</original>
    <variation>A</variation>
    <location>
        <position position="313"/>
    </location>
</feature>
<feature type="mutagenesis site" description="Negligible change in catalytic activity." evidence="6">
    <original>Y</original>
    <variation>F</variation>
    <location>
        <position position="315"/>
    </location>
</feature>
<feature type="mutagenesis site" description="Increased catalysis rate but decreased affinity with substrate." evidence="6">
    <original>R</original>
    <variation>A</variation>
    <location>
        <position position="612"/>
    </location>
</feature>
<feature type="helix" evidence="17">
    <location>
        <begin position="28"/>
        <end position="41"/>
    </location>
</feature>
<feature type="turn" evidence="16">
    <location>
        <begin position="43"/>
        <end position="45"/>
    </location>
</feature>
<feature type="helix" evidence="17">
    <location>
        <begin position="51"/>
        <end position="70"/>
    </location>
</feature>
<feature type="helix" evidence="17">
    <location>
        <begin position="82"/>
        <end position="84"/>
    </location>
</feature>
<feature type="helix" evidence="17">
    <location>
        <begin position="90"/>
        <end position="108"/>
    </location>
</feature>
<feature type="turn" evidence="17">
    <location>
        <begin position="113"/>
        <end position="116"/>
    </location>
</feature>
<feature type="helix" evidence="17">
    <location>
        <begin position="118"/>
        <end position="134"/>
    </location>
</feature>
<feature type="strand" evidence="17">
    <location>
        <begin position="144"/>
        <end position="146"/>
    </location>
</feature>
<feature type="helix" evidence="17">
    <location>
        <begin position="147"/>
        <end position="151"/>
    </location>
</feature>
<feature type="helix" evidence="17">
    <location>
        <begin position="153"/>
        <end position="164"/>
    </location>
</feature>
<feature type="helix" evidence="17">
    <location>
        <begin position="166"/>
        <end position="168"/>
    </location>
</feature>
<feature type="helix" evidence="17">
    <location>
        <begin position="171"/>
        <end position="184"/>
    </location>
</feature>
<feature type="helix" evidence="17">
    <location>
        <begin position="192"/>
        <end position="209"/>
    </location>
</feature>
<feature type="helix" evidence="17">
    <location>
        <begin position="212"/>
        <end position="221"/>
    </location>
</feature>
<feature type="strand" evidence="17">
    <location>
        <begin position="227"/>
        <end position="229"/>
    </location>
</feature>
<feature type="strand" evidence="17">
    <location>
        <begin position="232"/>
        <end position="237"/>
    </location>
</feature>
<feature type="strand" evidence="17">
    <location>
        <begin position="243"/>
        <end position="245"/>
    </location>
</feature>
<feature type="turn" evidence="17">
    <location>
        <begin position="246"/>
        <end position="248"/>
    </location>
</feature>
<feature type="turn" evidence="17">
    <location>
        <begin position="252"/>
        <end position="254"/>
    </location>
</feature>
<feature type="helix" evidence="17">
    <location>
        <begin position="255"/>
        <end position="270"/>
    </location>
</feature>
<feature type="helix" evidence="17">
    <location>
        <begin position="280"/>
        <end position="283"/>
    </location>
</feature>
<feature type="helix" evidence="17">
    <location>
        <begin position="284"/>
        <end position="291"/>
    </location>
</feature>
<feature type="helix" evidence="17">
    <location>
        <begin position="294"/>
        <end position="296"/>
    </location>
</feature>
<feature type="helix" evidence="17">
    <location>
        <begin position="304"/>
        <end position="306"/>
    </location>
</feature>
<feature type="helix" evidence="17">
    <location>
        <begin position="308"/>
        <end position="312"/>
    </location>
</feature>
<feature type="helix" evidence="18">
    <location>
        <begin position="314"/>
        <end position="316"/>
    </location>
</feature>
<feature type="helix" evidence="17">
    <location>
        <begin position="318"/>
        <end position="332"/>
    </location>
</feature>
<feature type="turn" evidence="17">
    <location>
        <begin position="333"/>
        <end position="335"/>
    </location>
</feature>
<feature type="helix" evidence="17">
    <location>
        <begin position="340"/>
        <end position="354"/>
    </location>
</feature>
<feature type="helix" evidence="17">
    <location>
        <begin position="360"/>
        <end position="363"/>
    </location>
</feature>
<feature type="helix" evidence="17">
    <location>
        <begin position="366"/>
        <end position="376"/>
    </location>
</feature>
<feature type="strand" evidence="17">
    <location>
        <begin position="389"/>
        <end position="393"/>
    </location>
</feature>
<feature type="helix" evidence="17">
    <location>
        <begin position="394"/>
        <end position="396"/>
    </location>
</feature>
<feature type="strand" evidence="17">
    <location>
        <begin position="398"/>
        <end position="403"/>
    </location>
</feature>
<feature type="strand" evidence="17">
    <location>
        <begin position="406"/>
        <end position="411"/>
    </location>
</feature>
<feature type="strand" evidence="17">
    <location>
        <begin position="415"/>
        <end position="417"/>
    </location>
</feature>
<feature type="turn" evidence="17">
    <location>
        <begin position="431"/>
        <end position="434"/>
    </location>
</feature>
<feature type="strand" evidence="17">
    <location>
        <begin position="435"/>
        <end position="441"/>
    </location>
</feature>
<feature type="turn" evidence="17">
    <location>
        <begin position="445"/>
        <end position="448"/>
    </location>
</feature>
<feature type="strand" evidence="18">
    <location>
        <begin position="449"/>
        <end position="451"/>
    </location>
</feature>
<feature type="helix" evidence="17">
    <location>
        <begin position="452"/>
        <end position="455"/>
    </location>
</feature>
<feature type="strand" evidence="17">
    <location>
        <begin position="465"/>
        <end position="467"/>
    </location>
</feature>
<feature type="strand" evidence="16">
    <location>
        <begin position="474"/>
        <end position="476"/>
    </location>
</feature>
<feature type="strand" evidence="17">
    <location>
        <begin position="482"/>
        <end position="487"/>
    </location>
</feature>
<feature type="turn" evidence="17">
    <location>
        <begin position="488"/>
        <end position="490"/>
    </location>
</feature>
<feature type="strand" evidence="17">
    <location>
        <begin position="491"/>
        <end position="499"/>
    </location>
</feature>
<feature type="strand" evidence="17">
    <location>
        <begin position="501"/>
        <end position="503"/>
    </location>
</feature>
<feature type="strand" evidence="17">
    <location>
        <begin position="506"/>
        <end position="513"/>
    </location>
</feature>
<feature type="strand" evidence="17">
    <location>
        <begin position="518"/>
        <end position="526"/>
    </location>
</feature>
<feature type="strand" evidence="17">
    <location>
        <begin position="529"/>
        <end position="541"/>
    </location>
</feature>
<feature type="strand" evidence="17">
    <location>
        <begin position="550"/>
        <end position="552"/>
    </location>
</feature>
<feature type="strand" evidence="19">
    <location>
        <begin position="555"/>
        <end position="557"/>
    </location>
</feature>
<feature type="strand" evidence="17">
    <location>
        <begin position="563"/>
        <end position="575"/>
    </location>
</feature>
<feature type="strand" evidence="17">
    <location>
        <begin position="578"/>
        <end position="582"/>
    </location>
</feature>
<feature type="strand" evidence="17">
    <location>
        <begin position="585"/>
        <end position="604"/>
    </location>
</feature>
<feature type="helix" evidence="17">
    <location>
        <begin position="606"/>
        <end position="608"/>
    </location>
</feature>
<feature type="strand" evidence="17">
    <location>
        <begin position="620"/>
        <end position="634"/>
    </location>
</feature>
<feature type="strand" evidence="17">
    <location>
        <begin position="636"/>
        <end position="646"/>
    </location>
</feature>
<feature type="helix" evidence="17">
    <location>
        <begin position="650"/>
        <end position="658"/>
    </location>
</feature>
<feature type="strand" evidence="17">
    <location>
        <begin position="661"/>
        <end position="676"/>
    </location>
</feature>
<feature type="turn" evidence="17">
    <location>
        <begin position="677"/>
        <end position="680"/>
    </location>
</feature>
<feature type="strand" evidence="17">
    <location>
        <begin position="681"/>
        <end position="686"/>
    </location>
</feature>
<feature type="strand" evidence="17">
    <location>
        <begin position="688"/>
        <end position="690"/>
    </location>
</feature>
<feature type="strand" evidence="17">
    <location>
        <begin position="692"/>
        <end position="694"/>
    </location>
</feature>
<feature type="strand" evidence="17">
    <location>
        <begin position="697"/>
        <end position="710"/>
    </location>
</feature>
<feature type="turn" evidence="17">
    <location>
        <begin position="711"/>
        <end position="713"/>
    </location>
</feature>
<feature type="strand" evidence="17">
    <location>
        <begin position="714"/>
        <end position="720"/>
    </location>
</feature>
<feature type="strand" evidence="17">
    <location>
        <begin position="727"/>
        <end position="736"/>
    </location>
</feature>
<feature type="strand" evidence="17">
    <location>
        <begin position="738"/>
        <end position="743"/>
    </location>
</feature>
<feature type="strand" evidence="17">
    <location>
        <begin position="747"/>
        <end position="751"/>
    </location>
</feature>
<feature type="strand" evidence="17">
    <location>
        <begin position="753"/>
        <end position="761"/>
    </location>
</feature>
<feature type="strand" evidence="17">
    <location>
        <begin position="769"/>
        <end position="776"/>
    </location>
</feature>
<comment type="function">
    <text evidence="2 3 5 7">Plays a role in xanthan depolymerization pathway by cleaving the linkage between the terminal mannosyl and glucuronyl residues of the side chain of xanthan to liberate pyruvylated mannose. Is highly specific for pyruvylated side-chains of xanthan and is not effective with hyaluronate, chondroitin A, gellan, heparin or pectin.</text>
</comment>
<comment type="catalytic activity">
    <reaction evidence="2 3 5 7">
        <text>Eliminative cleavage of the terminal beta-D-mannosyl-(1-&gt;4)-beta-D-glucuronosyl linkage of the side-chain of the polysaccharide xanthan, leaving a 4-deoxy-alpha-L-threo-hex-4-enuronosyl group at the terminus of the side-chain.</text>
        <dbReference type="EC" id="4.2.2.12"/>
    </reaction>
</comment>
<comment type="activity regulation">
    <text evidence="3 6 7">Activated by Co(2+) at 1 mM. Completely inhibited by Hg(2+) but not affected by other divalent cations. Intensely inhibited by NaCl and KCl at 150 mM, in particular by the Na(+) and K(+) ions but not the Cl(-) ions. Partially inhibited by iodoacetamide and N-ethylmaleimide at 1 mM but not by dithiothreitol, reduced glutathione or 2-mercaptoethanol.</text>
</comment>
<comment type="biophysicochemical properties">
    <kinetics>
        <KM evidence="5 7">0.25 mM for xanthan</KM>
        <text evidence="5">kcat is 2170 sec(-1).</text>
    </kinetics>
    <phDependence>
        <text evidence="5 7">Optimum pH is 5.5 (in the presence of sodium acetate). Active between pH 6.5 and 9.</text>
    </phDependence>
    <temperatureDependence>
        <text evidence="5 7">Optimum temperature is 50 degrees Celsius. Stable at 4 degrees Celsius at pH 6.5 - 9. 60% loss of activity when incubated at 45 degrees Celsius and pH 7.0 for 10 minutes.</text>
    </temperatureDependence>
</comment>
<comment type="subunit">
    <text evidence="3 4 6 7">Monomer.</text>
</comment>
<comment type="subcellular location">
    <subcellularLocation>
        <location evidence="7">Secreted</location>
    </subcellularLocation>
</comment>
<comment type="miscellaneous">
    <text evidence="8">The 99 kDa precursor is converted to a mature form (77 kDa) through the removal of a C-terminal (22 kDa) fragment without any loss in activity.</text>
</comment>
<comment type="similarity">
    <text evidence="1">Belongs to the polysaccharide lyase 8 family.</text>
</comment>
<name>XANLY_BACGL</name>
<gene>
    <name evidence="10" type="primary">xly</name>
</gene>